<evidence type="ECO:0000250" key="1">
    <source>
        <dbReference type="UniProtKB" id="O95831"/>
    </source>
</evidence>
<evidence type="ECO:0000250" key="2">
    <source>
        <dbReference type="UniProtKB" id="Q9Z0X1"/>
    </source>
</evidence>
<evidence type="ECO:0000255" key="3"/>
<evidence type="ECO:0000256" key="4">
    <source>
        <dbReference type="SAM" id="MobiDB-lite"/>
    </source>
</evidence>
<evidence type="ECO:0000305" key="5"/>
<evidence type="ECO:0007744" key="6">
    <source>
    </source>
</evidence>
<accession>Q9JM53</accession>
<accession>Q548E3</accession>
<protein>
    <recommendedName>
        <fullName>Apoptosis-inducing factor 1, mitochondrial</fullName>
        <ecNumber evidence="1">1.6.99.-</ecNumber>
    </recommendedName>
    <alternativeName>
        <fullName>Programmed cell death protein 8</fullName>
    </alternativeName>
</protein>
<proteinExistence type="evidence at protein level"/>
<comment type="function">
    <text evidence="1 2">Functions both as NADH oxidoreductase and as regulator of apoptosis (By similarity). In response to apoptotic stimuli, it is released from the mitochondrion intermembrane space into the cytosol and to the nucleus, where it functions as a proapoptotic factor in a caspase-independent pathway. Release into the cytoplasm is mediated upon binding to poly-ADP-ribose chains. The soluble form (AIFsol) found in the nucleus induces 'parthanatos' i.e. caspase-independent fragmentation of chromosomal DNA. Binds to DNA in a sequence-independent manner (By similarity). Interacts with EIF3G, and thereby inhibits the EIF3 machinery and protein synthesis, and activates caspase-7 to amplify apoptosis (By similarity). Plays a critical role in caspase-independent, pyknotic cell death in hydrogen peroxide-exposed cells (By similarity). In contrast, participates in normal mitochondrial metabolism. Plays an important role in the regulation of respiratory chain biogenesis by interacting with CHCHD4 and controlling CHCHD4 mitochondrial import (By similarity).</text>
</comment>
<comment type="catalytic activity">
    <reaction evidence="1">
        <text>A + NADH + H(+) = AH2 + NAD(+)</text>
        <dbReference type="Rhea" id="RHEA:11356"/>
        <dbReference type="ChEBI" id="CHEBI:13193"/>
        <dbReference type="ChEBI" id="CHEBI:15378"/>
        <dbReference type="ChEBI" id="CHEBI:17499"/>
        <dbReference type="ChEBI" id="CHEBI:57540"/>
        <dbReference type="ChEBI" id="CHEBI:57945"/>
    </reaction>
</comment>
<comment type="cofactor">
    <cofactor evidence="1">
        <name>FAD</name>
        <dbReference type="ChEBI" id="CHEBI:57692"/>
    </cofactor>
</comment>
<comment type="subunit">
    <text evidence="1">Monomer (oxidized form). Homodimer (reduced form). Upon reduction with NADH, undergoes dimerization and forms tight, long-lived FADH2-NAD charge transfer complexes (CTC) resistant to oxidation. Also dimerizes with isoform 3 preventing its release from mitochondria. Interacts with XIAP/BIRC4. Interacts (via N-terminus) with EIF3G (via C-terminus). Interacts with PRELID1. Interacts with CHCHD4; the interaction increases in presence of NADH. Interacts with processed form of PARP1 (Poly [ADP-ribose] polymerase 1, processed C-terminus); interaction is mediated with poly-ADP-ribose chains attached to PARP1, promoting translocation into the nucleus.</text>
</comment>
<comment type="subcellular location">
    <subcellularLocation>
        <location evidence="2">Mitochondrion intermembrane space</location>
    </subcellularLocation>
    <subcellularLocation>
        <location evidence="2">Mitochondrion inner membrane</location>
    </subcellularLocation>
    <subcellularLocation>
        <location evidence="2">Cytoplasm</location>
    </subcellularLocation>
    <subcellularLocation>
        <location evidence="2">Nucleus</location>
    </subcellularLocation>
    <subcellularLocation>
        <location evidence="1">Cytoplasm</location>
        <location evidence="1">Perinuclear region</location>
    </subcellularLocation>
    <text evidence="1 2">Proteolytic cleavage during or just after translocation into the mitochondrial intermembrane space (IMS) results in the formation of an inner-membrane-anchored mature form (AIFmit) (By similarity). During apoptosis, further proteolytic processing leads to a mature form, which is confined to the mitochondrial IMS in a soluble form (AIFsol) (By similarity). AIFsol is released to the cytoplasm in response to specific death signals, and translocated to the nucleus, where it induces nuclear apoptosis. Release into the cytoplasm is mediated upon binding to poly-ADP-ribose chains (By similarity). Translocation into the nucleus is promoted by interaction with (auto-poly-ADP-ribosylated) processed form of PARP1 (By similarity). Colocalizes with EIF3G in the nucleus and perinuclear region (By similarity).</text>
</comment>
<comment type="PTM">
    <text evidence="1">Under normal conditions, a 54-residue N-terminal segment is first proteolytically removed during or just after translocation into the mitochondrial intermembrane space (IMS) by the mitochondrial processing peptidase (MPP) to form the inner-membrane-anchored mature form (AIFmit). During apoptosis, it is further proteolytically processed at amino-acid position 101 leading to the generation of the mature form, which is confined to the mitochondrial IMS in a soluble form (AIFsol). AIFsol is released to the cytoplasm in response to specific death signals, and translocated to the nucleus, where it induces nuclear apoptosis in a caspase-independent manner.</text>
</comment>
<comment type="PTM">
    <text evidence="1">Ubiquitination by XIAP/BIRC4 does not lead to proteasomal degradation. Ubiquitination at Lys-254 by XIAP/BIRC4 blocks its ability to bind DNA and induce chromatin degradation, thereby inhibiting its ability to induce cell death.</text>
</comment>
<comment type="similarity">
    <text evidence="5">Belongs to the FAD-dependent oxidoreductase family.</text>
</comment>
<organism>
    <name type="scientific">Rattus norvegicus</name>
    <name type="common">Rat</name>
    <dbReference type="NCBI Taxonomy" id="10116"/>
    <lineage>
        <taxon>Eukaryota</taxon>
        <taxon>Metazoa</taxon>
        <taxon>Chordata</taxon>
        <taxon>Craniata</taxon>
        <taxon>Vertebrata</taxon>
        <taxon>Euteleostomi</taxon>
        <taxon>Mammalia</taxon>
        <taxon>Eutheria</taxon>
        <taxon>Euarchontoglires</taxon>
        <taxon>Glires</taxon>
        <taxon>Rodentia</taxon>
        <taxon>Myomorpha</taxon>
        <taxon>Muroidea</taxon>
        <taxon>Muridae</taxon>
        <taxon>Murinae</taxon>
        <taxon>Rattus</taxon>
    </lineage>
</organism>
<feature type="transit peptide" description="Mitochondrion" evidence="1">
    <location>
        <begin position="1"/>
        <end position="53"/>
    </location>
</feature>
<feature type="propeptide" id="PRO_0000448978" description="Removed in mature form" evidence="1">
    <location>
        <begin position="54"/>
        <end position="100"/>
    </location>
</feature>
<feature type="propeptide" id="PRO_0000401937" description="Removed in mature form" evidence="1">
    <location>
        <begin position="55"/>
        <end position="101"/>
    </location>
</feature>
<feature type="chain" id="PRO_0000022032" description="Apoptosis-inducing factor 1, mitochondrial">
    <location>
        <begin position="102"/>
        <end position="612"/>
    </location>
</feature>
<feature type="region of interest" description="FAD-dependent oxidoreductase" evidence="2">
    <location>
        <begin position="133"/>
        <end position="482"/>
    </location>
</feature>
<feature type="region of interest" description="Disordered" evidence="4">
    <location>
        <begin position="512"/>
        <end position="551"/>
    </location>
</feature>
<feature type="short sequence motif" description="Mitochondrial localization signal" evidence="2">
    <location>
        <begin position="1"/>
        <end position="30"/>
    </location>
</feature>
<feature type="short sequence motif" description="Mitochondrial localization signal" evidence="2">
    <location>
        <begin position="62"/>
        <end position="88"/>
    </location>
</feature>
<feature type="short sequence motif" description="Nuclear localization signal" evidence="3">
    <location>
        <begin position="445"/>
        <end position="450"/>
    </location>
</feature>
<feature type="compositionally biased region" description="Polar residues" evidence="4">
    <location>
        <begin position="512"/>
        <end position="528"/>
    </location>
</feature>
<feature type="binding site" evidence="1">
    <location>
        <begin position="137"/>
        <end position="141"/>
    </location>
    <ligand>
        <name>FAD</name>
        <dbReference type="ChEBI" id="CHEBI:57692"/>
    </ligand>
</feature>
<feature type="binding site" evidence="1">
    <location>
        <begin position="163"/>
        <end position="164"/>
    </location>
    <ligand>
        <name>FAD</name>
        <dbReference type="ChEBI" id="CHEBI:57692"/>
    </ligand>
</feature>
<feature type="binding site" evidence="1">
    <location>
        <position position="171"/>
    </location>
    <ligand>
        <name>FAD</name>
        <dbReference type="ChEBI" id="CHEBI:57692"/>
    </ligand>
</feature>
<feature type="binding site" evidence="1">
    <location>
        <position position="176"/>
    </location>
    <ligand>
        <name>FAD</name>
        <dbReference type="ChEBI" id="CHEBI:57692"/>
    </ligand>
</feature>
<feature type="binding site" evidence="1">
    <location>
        <position position="195"/>
    </location>
    <ligand>
        <name>NAD(+)</name>
        <dbReference type="ChEBI" id="CHEBI:57540"/>
        <label>2</label>
    </ligand>
</feature>
<feature type="binding site" evidence="1">
    <location>
        <position position="232"/>
    </location>
    <ligand>
        <name>FAD</name>
        <dbReference type="ChEBI" id="CHEBI:57692"/>
    </ligand>
</feature>
<feature type="binding site" evidence="1">
    <location>
        <position position="284"/>
    </location>
    <ligand>
        <name>FAD</name>
        <dbReference type="ChEBI" id="CHEBI:57692"/>
    </ligand>
</feature>
<feature type="binding site" evidence="1">
    <location>
        <begin position="307"/>
        <end position="310"/>
    </location>
    <ligand>
        <name>NAD(+)</name>
        <dbReference type="ChEBI" id="CHEBI:57540"/>
        <label>1</label>
    </ligand>
</feature>
<feature type="binding site" evidence="1">
    <location>
        <position position="335"/>
    </location>
    <ligand>
        <name>NAD(+)</name>
        <dbReference type="ChEBI" id="CHEBI:57540"/>
        <label>1</label>
    </ligand>
</feature>
<feature type="binding site" evidence="2">
    <location>
        <position position="341"/>
    </location>
    <ligand>
        <name>NAD(+)</name>
        <dbReference type="ChEBI" id="CHEBI:57540"/>
        <label>1</label>
    </ligand>
</feature>
<feature type="binding site" evidence="1">
    <location>
        <position position="398"/>
    </location>
    <ligand>
        <name>NAD(+)</name>
        <dbReference type="ChEBI" id="CHEBI:57540"/>
        <label>1</label>
    </ligand>
</feature>
<feature type="binding site" evidence="1">
    <location>
        <position position="437"/>
    </location>
    <ligand>
        <name>FAD</name>
        <dbReference type="ChEBI" id="CHEBI:57692"/>
    </ligand>
</feature>
<feature type="binding site" evidence="1">
    <location>
        <begin position="452"/>
        <end position="453"/>
    </location>
    <ligand>
        <name>NAD(+)</name>
        <dbReference type="ChEBI" id="CHEBI:57540"/>
        <label>1</label>
    </ligand>
</feature>
<feature type="binding site" evidence="1">
    <location>
        <begin position="453"/>
        <end position="454"/>
    </location>
    <ligand>
        <name>FAD</name>
        <dbReference type="ChEBI" id="CHEBI:57692"/>
    </ligand>
</feature>
<feature type="binding site" evidence="1">
    <location>
        <position position="482"/>
    </location>
    <ligand>
        <name>FAD</name>
        <dbReference type="ChEBI" id="CHEBI:57692"/>
    </ligand>
</feature>
<feature type="binding site" evidence="1">
    <location>
        <position position="482"/>
    </location>
    <ligand>
        <name>NAD(+)</name>
        <dbReference type="ChEBI" id="CHEBI:57540"/>
        <label>1</label>
    </ligand>
</feature>
<feature type="binding site" evidence="1">
    <location>
        <position position="492"/>
    </location>
    <ligand>
        <name>NAD(+)</name>
        <dbReference type="ChEBI" id="CHEBI:57540"/>
        <label>2</label>
    </ligand>
</feature>
<feature type="binding site" evidence="1">
    <location>
        <position position="582"/>
    </location>
    <ligand>
        <name>NAD(+)</name>
        <dbReference type="ChEBI" id="CHEBI:57540"/>
        <label>2</label>
    </ligand>
</feature>
<feature type="modified residue" description="N6-succinyllysine" evidence="2">
    <location>
        <position position="108"/>
    </location>
</feature>
<feature type="modified residue" description="Phosphoserine" evidence="1">
    <location>
        <position position="115"/>
    </location>
</feature>
<feature type="modified residue" description="Phosphoserine" evidence="6">
    <location>
        <position position="267"/>
    </location>
</feature>
<feature type="modified residue" description="Phosphoserine" evidence="1">
    <location>
        <position position="370"/>
    </location>
</feature>
<feature type="modified residue" description="N6-acetyllysine" evidence="2">
    <location>
        <position position="387"/>
    </location>
</feature>
<feature type="modified residue" description="Phosphothreonine" evidence="1">
    <location>
        <position position="520"/>
    </location>
</feature>
<feature type="modified residue" description="Phosphoserine" evidence="1">
    <location>
        <position position="523"/>
    </location>
</feature>
<feature type="modified residue" description="Phosphoserine" evidence="1">
    <location>
        <position position="529"/>
    </location>
</feature>
<feature type="modified residue" description="N6-acetyllysine" evidence="2">
    <location>
        <position position="592"/>
    </location>
</feature>
<feature type="cross-link" description="Glycyl lysine isopeptide (Lys-Gly) (interchain with G-Cter in ubiquitin)" evidence="1">
    <location>
        <position position="254"/>
    </location>
</feature>
<sequence length="612" mass="66723">MFRCGGLAGAFKQKLVPLVRSVCVQRPKQRNRLPGNLFQQWRVPLELQMARQMASSGPSGGKMDNSVLVLIVGLSTIGAGAYAYKTIKEDQKRYNERIMGLGLSPEEKQRRAIASAAEGGSVPPIRVPSHVPFLLIGGGTAAFAAARSIRARDPGARVLIVSEDPELPYMRPPLSKELWFSDDPNVTKTLQFRQWNGKERSIYFQPPSFYVSAQDLPHIENGGVAVLTGKKVVHLDVRGNMVKLNDGSQITFEKCLIATGGTPRSLSAIDRAGAEVKSRTTLFRKIGDFRALEKISREVKSITVIGGGFLGSELACALGRKSQASGIEVIQLFPEKGNMGKILPEYLSNWTMEKVKREGVKVMPNAIVQSVGVSGGKLLIKLKDGRKVETDHIVTAVGLEPNVELAKTGGLEIDSDFGGFRVNAELQARSNIWVAGDAACFYDIKLGRRRVEHHDHAVVSGRLAGENMTGAAKPYWHQSMFWSDLGPDVGYEAIGLVDSSLPTVGVFAKATAQDNPKSATEQSGTGIRSESETESEASEITIPPSDPAVPQVPVEGEDYGKGVIFYLRDKVVVGIVLWNVFNRMPIARKIIKDGEQHEDLNEVAKLFNIHED</sequence>
<gene>
    <name type="primary">Aifm1</name>
    <name type="synonym">Aif</name>
    <name type="synonym">Pdcd8</name>
</gene>
<keyword id="KW-0007">Acetylation</keyword>
<keyword id="KW-0053">Apoptosis</keyword>
<keyword id="KW-0963">Cytoplasm</keyword>
<keyword id="KW-0903">Direct protein sequencing</keyword>
<keyword id="KW-0238">DNA-binding</keyword>
<keyword id="KW-0274">FAD</keyword>
<keyword id="KW-0285">Flavoprotein</keyword>
<keyword id="KW-1017">Isopeptide bond</keyword>
<keyword id="KW-0472">Membrane</keyword>
<keyword id="KW-0496">Mitochondrion</keyword>
<keyword id="KW-0999">Mitochondrion inner membrane</keyword>
<keyword id="KW-0520">NAD</keyword>
<keyword id="KW-0539">Nucleus</keyword>
<keyword id="KW-0560">Oxidoreductase</keyword>
<keyword id="KW-0597">Phosphoprotein</keyword>
<keyword id="KW-1185">Reference proteome</keyword>
<keyword id="KW-0809">Transit peptide</keyword>
<keyword id="KW-0832">Ubl conjugation</keyword>
<dbReference type="EC" id="1.6.99.-" evidence="1"/>
<dbReference type="EMBL" id="AB041723">
    <property type="protein sequence ID" value="BAA94745.1"/>
    <property type="molecule type" value="mRNA"/>
</dbReference>
<dbReference type="EMBL" id="AF375656">
    <property type="protein sequence ID" value="AAM46094.1"/>
    <property type="molecule type" value="mRNA"/>
</dbReference>
<dbReference type="EMBL" id="BC072697">
    <property type="protein sequence ID" value="AAH72697.1"/>
    <property type="molecule type" value="mRNA"/>
</dbReference>
<dbReference type="RefSeq" id="NP_112646.1">
    <property type="nucleotide sequence ID" value="NM_031356.2"/>
</dbReference>
<dbReference type="SMR" id="Q9JM53"/>
<dbReference type="BioGRID" id="249749">
    <property type="interactions" value="2"/>
</dbReference>
<dbReference type="FunCoup" id="Q9JM53">
    <property type="interactions" value="2448"/>
</dbReference>
<dbReference type="STRING" id="10116.ENSRNOP00000008503"/>
<dbReference type="GlyGen" id="Q9JM53">
    <property type="glycosylation" value="1 site, 1 O-linked glycan (1 site)"/>
</dbReference>
<dbReference type="iPTMnet" id="Q9JM53"/>
<dbReference type="PhosphoSitePlus" id="Q9JM53"/>
<dbReference type="SwissPalm" id="Q9JM53"/>
<dbReference type="jPOST" id="Q9JM53"/>
<dbReference type="PaxDb" id="10116-ENSRNOP00000008503"/>
<dbReference type="Ensembl" id="ENSRNOT00000008503.6">
    <property type="protein sequence ID" value="ENSRNOP00000008503.3"/>
    <property type="gene ID" value="ENSRNOG00000006067.7"/>
</dbReference>
<dbReference type="GeneID" id="83533"/>
<dbReference type="KEGG" id="rno:83533"/>
<dbReference type="UCSC" id="RGD:620817">
    <property type="organism name" value="rat"/>
</dbReference>
<dbReference type="AGR" id="RGD:620817"/>
<dbReference type="CTD" id="9131"/>
<dbReference type="RGD" id="620817">
    <property type="gene designation" value="Aifm1"/>
</dbReference>
<dbReference type="eggNOG" id="KOG1346">
    <property type="taxonomic scope" value="Eukaryota"/>
</dbReference>
<dbReference type="GeneTree" id="ENSGT00940000156455"/>
<dbReference type="HOGENOM" id="CLU_003291_5_3_1"/>
<dbReference type="InParanoid" id="Q9JM53"/>
<dbReference type="OMA" id="RSIFFEH"/>
<dbReference type="OrthoDB" id="6029at2759"/>
<dbReference type="PhylomeDB" id="Q9JM53"/>
<dbReference type="TreeFam" id="TF314028"/>
<dbReference type="PRO" id="PR:Q9JM53"/>
<dbReference type="Proteomes" id="UP000002494">
    <property type="component" value="Chromosome X"/>
</dbReference>
<dbReference type="Bgee" id="ENSRNOG00000006067">
    <property type="expression patterns" value="Expressed in heart and 20 other cell types or tissues"/>
</dbReference>
<dbReference type="ExpressionAtlas" id="Q9JM53">
    <property type="expression patterns" value="baseline and differential"/>
</dbReference>
<dbReference type="GO" id="GO:0005737">
    <property type="term" value="C:cytoplasm"/>
    <property type="evidence" value="ECO:0000266"/>
    <property type="project" value="RGD"/>
</dbReference>
<dbReference type="GO" id="GO:0005829">
    <property type="term" value="C:cytosol"/>
    <property type="evidence" value="ECO:0000250"/>
    <property type="project" value="UniProtKB"/>
</dbReference>
<dbReference type="GO" id="GO:0005743">
    <property type="term" value="C:mitochondrial inner membrane"/>
    <property type="evidence" value="ECO:0007669"/>
    <property type="project" value="UniProtKB-SubCell"/>
</dbReference>
<dbReference type="GO" id="GO:0005758">
    <property type="term" value="C:mitochondrial intermembrane space"/>
    <property type="evidence" value="ECO:0000250"/>
    <property type="project" value="UniProtKB"/>
</dbReference>
<dbReference type="GO" id="GO:0005739">
    <property type="term" value="C:mitochondrion"/>
    <property type="evidence" value="ECO:0000266"/>
    <property type="project" value="RGD"/>
</dbReference>
<dbReference type="GO" id="GO:0005634">
    <property type="term" value="C:nucleus"/>
    <property type="evidence" value="ECO:0000266"/>
    <property type="project" value="RGD"/>
</dbReference>
<dbReference type="GO" id="GO:0048471">
    <property type="term" value="C:perinuclear region of cytoplasm"/>
    <property type="evidence" value="ECO:0007669"/>
    <property type="project" value="UniProtKB-SubCell"/>
</dbReference>
<dbReference type="GO" id="GO:0003677">
    <property type="term" value="F:DNA binding"/>
    <property type="evidence" value="ECO:0000250"/>
    <property type="project" value="UniProtKB"/>
</dbReference>
<dbReference type="GO" id="GO:0071949">
    <property type="term" value="F:FAD binding"/>
    <property type="evidence" value="ECO:0000250"/>
    <property type="project" value="UniProtKB"/>
</dbReference>
<dbReference type="GO" id="GO:0016174">
    <property type="term" value="F:NAD(P)H oxidase H2O2-forming activity"/>
    <property type="evidence" value="ECO:0000250"/>
    <property type="project" value="UniProtKB"/>
</dbReference>
<dbReference type="GO" id="GO:0003954">
    <property type="term" value="F:NADH dehydrogenase activity"/>
    <property type="evidence" value="ECO:0007669"/>
    <property type="project" value="RHEA"/>
</dbReference>
<dbReference type="GO" id="GO:0016651">
    <property type="term" value="F:oxidoreductase activity, acting on NAD(P)H"/>
    <property type="evidence" value="ECO:0000250"/>
    <property type="project" value="UniProtKB"/>
</dbReference>
<dbReference type="GO" id="GO:0072572">
    <property type="term" value="F:poly-ADP-D-ribose binding"/>
    <property type="evidence" value="ECO:0000250"/>
    <property type="project" value="UniProtKB"/>
</dbReference>
<dbReference type="GO" id="GO:0046983">
    <property type="term" value="F:protein dimerization activity"/>
    <property type="evidence" value="ECO:0007669"/>
    <property type="project" value="InterPro"/>
</dbReference>
<dbReference type="GO" id="GO:0006915">
    <property type="term" value="P:apoptotic process"/>
    <property type="evidence" value="ECO:0000266"/>
    <property type="project" value="RGD"/>
</dbReference>
<dbReference type="GO" id="GO:1904045">
    <property type="term" value="P:cellular response to aldosterone"/>
    <property type="evidence" value="ECO:0000270"/>
    <property type="project" value="RGD"/>
</dbReference>
<dbReference type="GO" id="GO:0071392">
    <property type="term" value="P:cellular response to estradiol stimulus"/>
    <property type="evidence" value="ECO:0000270"/>
    <property type="project" value="RGD"/>
</dbReference>
<dbReference type="GO" id="GO:0070301">
    <property type="term" value="P:cellular response to hydrogen peroxide"/>
    <property type="evidence" value="ECO:0000270"/>
    <property type="project" value="RGD"/>
</dbReference>
<dbReference type="GO" id="GO:0071456">
    <property type="term" value="P:cellular response to hypoxia"/>
    <property type="evidence" value="ECO:0000270"/>
    <property type="project" value="RGD"/>
</dbReference>
<dbReference type="GO" id="GO:0071732">
    <property type="term" value="P:cellular response to nitric oxide"/>
    <property type="evidence" value="ECO:0000270"/>
    <property type="project" value="RGD"/>
</dbReference>
<dbReference type="GO" id="GO:0070059">
    <property type="term" value="P:intrinsic apoptotic signaling pathway in response to endoplasmic reticulum stress"/>
    <property type="evidence" value="ECO:0000250"/>
    <property type="project" value="UniProtKB"/>
</dbReference>
<dbReference type="GO" id="GO:0160203">
    <property type="term" value="P:mitochondrial disulfide relay system"/>
    <property type="evidence" value="ECO:0000266"/>
    <property type="project" value="RGD"/>
</dbReference>
<dbReference type="GO" id="GO:0033108">
    <property type="term" value="P:mitochondrial respiratory chain complex assembly"/>
    <property type="evidence" value="ECO:0000250"/>
    <property type="project" value="UniProtKB"/>
</dbReference>
<dbReference type="GO" id="GO:0051402">
    <property type="term" value="P:neuron apoptotic process"/>
    <property type="evidence" value="ECO:0000266"/>
    <property type="project" value="RGD"/>
</dbReference>
<dbReference type="GO" id="GO:0043065">
    <property type="term" value="P:positive regulation of apoptotic process"/>
    <property type="evidence" value="ECO:0000250"/>
    <property type="project" value="UniProtKB"/>
</dbReference>
<dbReference type="GO" id="GO:0060545">
    <property type="term" value="P:positive regulation of necroptotic process"/>
    <property type="evidence" value="ECO:0000250"/>
    <property type="project" value="UniProtKB"/>
</dbReference>
<dbReference type="GO" id="GO:0043525">
    <property type="term" value="P:positive regulation of neuron apoptotic process"/>
    <property type="evidence" value="ECO:0000315"/>
    <property type="project" value="RGD"/>
</dbReference>
<dbReference type="GO" id="GO:0045041">
    <property type="term" value="P:protein import into mitochondrial intermembrane space"/>
    <property type="evidence" value="ECO:0000250"/>
    <property type="project" value="UniProtKB"/>
</dbReference>
<dbReference type="GO" id="GO:1902510">
    <property type="term" value="P:regulation of apoptotic DNA fragmentation"/>
    <property type="evidence" value="ECO:0000266"/>
    <property type="project" value="RGD"/>
</dbReference>
<dbReference type="GO" id="GO:0002931">
    <property type="term" value="P:response to ischemia"/>
    <property type="evidence" value="ECO:0000270"/>
    <property type="project" value="RGD"/>
</dbReference>
<dbReference type="GO" id="GO:1902065">
    <property type="term" value="P:response to L-glutamate"/>
    <property type="evidence" value="ECO:0000270"/>
    <property type="project" value="RGD"/>
</dbReference>
<dbReference type="GO" id="GO:0009636">
    <property type="term" value="P:response to toxic substance"/>
    <property type="evidence" value="ECO:0000270"/>
    <property type="project" value="RGD"/>
</dbReference>
<dbReference type="FunFam" id="3.30.390.30:FF:000007">
    <property type="entry name" value="Putative apoptosis-inducing factor 1, mitochondrial"/>
    <property type="match status" value="1"/>
</dbReference>
<dbReference type="Gene3D" id="3.30.390.30">
    <property type="match status" value="1"/>
</dbReference>
<dbReference type="Gene3D" id="3.50.50.60">
    <property type="entry name" value="FAD/NAD(P)-binding domain"/>
    <property type="match status" value="2"/>
</dbReference>
<dbReference type="InterPro" id="IPR029324">
    <property type="entry name" value="AIF_C"/>
</dbReference>
<dbReference type="InterPro" id="IPR050446">
    <property type="entry name" value="FAD-oxidoreductase/Apoptosis"/>
</dbReference>
<dbReference type="InterPro" id="IPR036188">
    <property type="entry name" value="FAD/NAD-bd_sf"/>
</dbReference>
<dbReference type="InterPro" id="IPR023753">
    <property type="entry name" value="FAD/NAD-binding_dom"/>
</dbReference>
<dbReference type="InterPro" id="IPR016156">
    <property type="entry name" value="FAD/NAD-linked_Rdtase_dimer_sf"/>
</dbReference>
<dbReference type="PANTHER" id="PTHR43557">
    <property type="entry name" value="APOPTOSIS-INDUCING FACTOR 1"/>
    <property type="match status" value="1"/>
</dbReference>
<dbReference type="PANTHER" id="PTHR43557:SF4">
    <property type="entry name" value="APOPTOSIS-INDUCING FACTOR 1, MITOCHONDRIAL"/>
    <property type="match status" value="1"/>
</dbReference>
<dbReference type="Pfam" id="PF14721">
    <property type="entry name" value="AIF_C"/>
    <property type="match status" value="1"/>
</dbReference>
<dbReference type="Pfam" id="PF07992">
    <property type="entry name" value="Pyr_redox_2"/>
    <property type="match status" value="1"/>
</dbReference>
<dbReference type="PRINTS" id="PR00368">
    <property type="entry name" value="FADPNR"/>
</dbReference>
<dbReference type="PRINTS" id="PR00411">
    <property type="entry name" value="PNDRDTASEI"/>
</dbReference>
<dbReference type="SMART" id="SM01353">
    <property type="entry name" value="AIF_C"/>
    <property type="match status" value="1"/>
</dbReference>
<dbReference type="SUPFAM" id="SSF51905">
    <property type="entry name" value="FAD/NAD(P)-binding domain"/>
    <property type="match status" value="2"/>
</dbReference>
<dbReference type="SUPFAM" id="SSF55424">
    <property type="entry name" value="FAD/NAD-linked reductases, dimerisation (C-terminal) domain"/>
    <property type="match status" value="1"/>
</dbReference>
<reference key="1">
    <citation type="submission" date="2000-04" db="EMBL/GenBank/DDBJ databases">
        <title>Molecular cloning of rat apoptosis-inducing factor (AIF).</title>
        <authorList>
            <person name="Ohsakaya S."/>
            <person name="Mihara K."/>
        </authorList>
    </citation>
    <scope>NUCLEOTIDE SEQUENCE [MRNA]</scope>
    <source>
        <tissue>Liver</tissue>
    </source>
</reference>
<reference key="2">
    <citation type="submission" date="2001-05" db="EMBL/GenBank/DDBJ databases">
        <title>Cloning and characterization of rat apoptosis-inducing factor: implications for DNA fragmentation in cerebral ischemia.</title>
        <authorList>
            <person name="Cao G."/>
            <person name="Sheng L."/>
            <person name="Pei W."/>
            <person name="Chen J."/>
        </authorList>
    </citation>
    <scope>NUCLEOTIDE SEQUENCE [MRNA]</scope>
    <source>
        <strain>Sprague-Dawley</strain>
        <tissue>Cerebellum</tissue>
    </source>
</reference>
<reference key="3">
    <citation type="journal article" date="2004" name="Genome Res.">
        <title>The status, quality, and expansion of the NIH full-length cDNA project: the Mammalian Gene Collection (MGC).</title>
        <authorList>
            <consortium name="The MGC Project Team"/>
        </authorList>
    </citation>
    <scope>NUCLEOTIDE SEQUENCE [LARGE SCALE MRNA]</scope>
    <source>
        <tissue>Heart</tissue>
    </source>
</reference>
<reference key="4">
    <citation type="submission" date="2007-09" db="UniProtKB">
        <authorList>
            <person name="Lubec G."/>
            <person name="Kang S.U."/>
            <person name="Lubec S."/>
        </authorList>
    </citation>
    <scope>PROTEIN SEQUENCE OF 378-386</scope>
    <scope>IDENTIFICATION BY MASS SPECTROMETRY</scope>
    <source>
        <strain>Sprague-Dawley</strain>
        <tissue>Brain</tissue>
    </source>
</reference>
<reference key="5">
    <citation type="journal article" date="2012" name="Nat. Commun.">
        <title>Quantitative maps of protein phosphorylation sites across 14 different rat organs and tissues.</title>
        <authorList>
            <person name="Lundby A."/>
            <person name="Secher A."/>
            <person name="Lage K."/>
            <person name="Nordsborg N.B."/>
            <person name="Dmytriyev A."/>
            <person name="Lundby C."/>
            <person name="Olsen J.V."/>
        </authorList>
    </citation>
    <scope>PHOSPHORYLATION [LARGE SCALE ANALYSIS] AT SER-267</scope>
    <scope>IDENTIFICATION BY MASS SPECTROMETRY [LARGE SCALE ANALYSIS]</scope>
</reference>
<name>AIFM1_RAT</name>